<organism>
    <name type="scientific">Homo sapiens</name>
    <name type="common">Human</name>
    <dbReference type="NCBI Taxonomy" id="9606"/>
    <lineage>
        <taxon>Eukaryota</taxon>
        <taxon>Metazoa</taxon>
        <taxon>Chordata</taxon>
        <taxon>Craniata</taxon>
        <taxon>Vertebrata</taxon>
        <taxon>Euteleostomi</taxon>
        <taxon>Mammalia</taxon>
        <taxon>Eutheria</taxon>
        <taxon>Euarchontoglires</taxon>
        <taxon>Primates</taxon>
        <taxon>Haplorrhini</taxon>
        <taxon>Catarrhini</taxon>
        <taxon>Hominidae</taxon>
        <taxon>Homo</taxon>
    </lineage>
</organism>
<evidence type="ECO:0000255" key="1">
    <source>
        <dbReference type="PROSITE-ProRule" id="PRU00042"/>
    </source>
</evidence>
<evidence type="ECO:0000255" key="2">
    <source>
        <dbReference type="PROSITE-ProRule" id="PRU00119"/>
    </source>
</evidence>
<evidence type="ECO:0000256" key="3">
    <source>
        <dbReference type="SAM" id="MobiDB-lite"/>
    </source>
</evidence>
<evidence type="ECO:0000269" key="4">
    <source>
    </source>
</evidence>
<evidence type="ECO:0000269" key="5">
    <source>
    </source>
</evidence>
<evidence type="ECO:0000303" key="6">
    <source>
    </source>
</evidence>
<evidence type="ECO:0000305" key="7"/>
<evidence type="ECO:0000312" key="8">
    <source>
        <dbReference type="HGNC" id="HGNC:28200"/>
    </source>
</evidence>
<name>ZN764_HUMAN</name>
<accession>Q96H86</accession>
<accession>A8MZF4</accession>
<accession>B3KSN2</accession>
<accession>H9KV99</accession>
<accession>Q9BWS1</accession>
<comment type="function">
    <text evidence="5">Zinc finger protein that functions as a cofactor for steroid hormone receptors, such as NR3C1/GR (PubMed:28139699). Directs NR3C1/GR transcriptional activity toward specific biologic pathways by changing NR3C1/GR binding and transcriptional activity on the glucocorticoid-responsive genes (PubMed:28139699).</text>
</comment>
<comment type="subunit">
    <text evidence="5">Interacts (via KRAB domain) with NR3C1/GR (via NR LBD domain); the interaction regulates transcription factor activity of NR3C1 by directing its actions toward certain biologic pathways.</text>
</comment>
<comment type="interaction">
    <interactant intactId="EBI-745775">
        <id>Q96H86</id>
    </interactant>
    <interactant intactId="EBI-742909">
        <id>Q9H6L4</id>
        <label>ARMC7</label>
    </interactant>
    <organismsDiffer>false</organismsDiffer>
    <experiments>3</experiments>
</comment>
<comment type="interaction">
    <interactant intactId="EBI-745775">
        <id>Q96H86</id>
    </interactant>
    <interactant intactId="EBI-11524851">
        <id>Q8NA61-2</id>
        <label>CBY2</label>
    </interactant>
    <organismsDiffer>false</organismsDiffer>
    <experiments>3</experiments>
</comment>
<comment type="interaction">
    <interactant intactId="EBI-745775">
        <id>Q96H86</id>
    </interactant>
    <interactant intactId="EBI-11977221">
        <id>Q86Z20</id>
        <label>CCDC125</label>
    </interactant>
    <organismsDiffer>false</organismsDiffer>
    <experiments>3</experiments>
</comment>
<comment type="interaction">
    <interactant intactId="EBI-745775">
        <id>Q96H86</id>
    </interactant>
    <interactant intactId="EBI-750020">
        <id>P49760</id>
        <label>CLK2</label>
    </interactant>
    <organismsDiffer>false</organismsDiffer>
    <experiments>3</experiments>
</comment>
<comment type="interaction">
    <interactant intactId="EBI-745775">
        <id>Q96H86</id>
    </interactant>
    <interactant intactId="EBI-3867333">
        <id>A8MQ03</id>
        <label>CYSRT1</label>
    </interactant>
    <organismsDiffer>false</organismsDiffer>
    <experiments>3</experiments>
</comment>
<comment type="interaction">
    <interactant intactId="EBI-745775">
        <id>Q96H86</id>
    </interactant>
    <interactant intactId="EBI-740376">
        <id>Q86UW9</id>
        <label>DTX2</label>
    </interactant>
    <organismsDiffer>false</organismsDiffer>
    <experiments>3</experiments>
</comment>
<comment type="interaction">
    <interactant intactId="EBI-745775">
        <id>Q96H86</id>
    </interactant>
    <interactant intactId="EBI-739789">
        <id>Q92997</id>
        <label>DVL3</label>
    </interactant>
    <organismsDiffer>false</organismsDiffer>
    <experiments>3</experiments>
</comment>
<comment type="interaction">
    <interactant intactId="EBI-745775">
        <id>Q96H86</id>
    </interactant>
    <interactant intactId="EBI-750641">
        <id>Q5TD97</id>
        <label>FHL5</label>
    </interactant>
    <organismsDiffer>false</organismsDiffer>
    <experiments>3</experiments>
</comment>
<comment type="interaction">
    <interactant intactId="EBI-745775">
        <id>Q96H86</id>
    </interactant>
    <interactant intactId="EBI-5916454">
        <id>A6NEM1</id>
        <label>GOLGA6L9</label>
    </interactant>
    <organismsDiffer>false</organismsDiffer>
    <experiments>3</experiments>
</comment>
<comment type="interaction">
    <interactant intactId="EBI-745775">
        <id>Q96H86</id>
    </interactant>
    <interactant intactId="EBI-352986">
        <id>P52597</id>
        <label>HNRNPF</label>
    </interactant>
    <organismsDiffer>false</organismsDiffer>
    <experiments>3</experiments>
</comment>
<comment type="interaction">
    <interactant intactId="EBI-745775">
        <id>Q96H86</id>
    </interactant>
    <interactant intactId="EBI-746704">
        <id>Q9UJC3</id>
        <label>HOOK1</label>
    </interactant>
    <organismsDiffer>false</organismsDiffer>
    <experiments>3</experiments>
</comment>
<comment type="interaction">
    <interactant intactId="EBI-745775">
        <id>Q96H86</id>
    </interactant>
    <interactant intactId="EBI-358297">
        <id>O00505</id>
        <label>KPNA3</label>
    </interactant>
    <organismsDiffer>false</organismsDiffer>
    <experiments>3</experiments>
</comment>
<comment type="interaction">
    <interactant intactId="EBI-745775">
        <id>Q96H86</id>
    </interactant>
    <interactant intactId="EBI-11749135">
        <id>Q8IUG1</id>
        <label>KRTAP1-3</label>
    </interactant>
    <organismsDiffer>false</organismsDiffer>
    <experiments>3</experiments>
</comment>
<comment type="interaction">
    <interactant intactId="EBI-745775">
        <id>Q96H86</id>
    </interactant>
    <interactant intactId="EBI-10172290">
        <id>P60409</id>
        <label>KRTAP10-7</label>
    </interactant>
    <organismsDiffer>false</organismsDiffer>
    <experiments>3</experiments>
</comment>
<comment type="interaction">
    <interactant intactId="EBI-745775">
        <id>Q96H86</id>
    </interactant>
    <interactant intactId="EBI-10172052">
        <id>P60411</id>
        <label>KRTAP10-9</label>
    </interactant>
    <organismsDiffer>false</organismsDiffer>
    <experiments>3</experiments>
</comment>
<comment type="interaction">
    <interactant intactId="EBI-745775">
        <id>Q96H86</id>
    </interactant>
    <interactant intactId="EBI-10176379">
        <id>P59991</id>
        <label>KRTAP12-2</label>
    </interactant>
    <organismsDiffer>false</organismsDiffer>
    <experiments>3</experiments>
</comment>
<comment type="interaction">
    <interactant intactId="EBI-745775">
        <id>Q96H86</id>
    </interactant>
    <interactant intactId="EBI-14065470">
        <id>Q9BYR9</id>
        <label>KRTAP2-4</label>
    </interactant>
    <organismsDiffer>false</organismsDiffer>
    <experiments>3</experiments>
</comment>
<comment type="interaction">
    <interactant intactId="EBI-745775">
        <id>Q96H86</id>
    </interactant>
    <interactant intactId="EBI-11958132">
        <id>Q9BYR3</id>
        <label>KRTAP4-4</label>
    </interactant>
    <organismsDiffer>false</organismsDiffer>
    <experiments>3</experiments>
</comment>
<comment type="interaction">
    <interactant intactId="EBI-745775">
        <id>Q96H86</id>
    </interactant>
    <interactant intactId="EBI-724076">
        <id>Q99750</id>
        <label>MDFI</label>
    </interactant>
    <organismsDiffer>false</organismsDiffer>
    <experiments>4</experiments>
</comment>
<comment type="interaction">
    <interactant intactId="EBI-745775">
        <id>Q96H86</id>
    </interactant>
    <interactant intactId="EBI-10172526">
        <id>Q9UJV3-2</id>
        <label>MID2</label>
    </interactant>
    <organismsDiffer>false</organismsDiffer>
    <experiments>3</experiments>
</comment>
<comment type="interaction">
    <interactant intactId="EBI-745775">
        <id>Q96H86</id>
    </interactant>
    <interactant intactId="EBI-11522433">
        <id>Q5JR59-3</id>
        <label>MTUS2</label>
    </interactant>
    <organismsDiffer>false</organismsDiffer>
    <experiments>3</experiments>
</comment>
<comment type="interaction">
    <interactant intactId="EBI-745775">
        <id>Q96H86</id>
    </interactant>
    <interactant intactId="EBI-79165">
        <id>Q9NRD5</id>
        <label>PICK1</label>
    </interactant>
    <organismsDiffer>false</organismsDiffer>
    <experiments>3</experiments>
</comment>
<comment type="interaction">
    <interactant intactId="EBI-745775">
        <id>Q96H86</id>
    </interactant>
    <interactant intactId="EBI-5235692">
        <id>O75864</id>
        <label>PPP1R37</label>
    </interactant>
    <organismsDiffer>false</organismsDiffer>
    <experiments>3</experiments>
</comment>
<comment type="interaction">
    <interactant intactId="EBI-745775">
        <id>Q96H86</id>
    </interactant>
    <interactant intactId="EBI-740595">
        <id>Q9UMX1</id>
        <label>SUFU</label>
    </interactant>
    <organismsDiffer>false</organismsDiffer>
    <experiments>9</experiments>
</comment>
<comment type="interaction">
    <interactant intactId="EBI-745775">
        <id>Q96H86</id>
    </interactant>
    <interactant intactId="EBI-2130415">
        <id>O00635</id>
        <label>TRIM38</label>
    </interactant>
    <organismsDiffer>false</organismsDiffer>
    <experiments>3</experiments>
</comment>
<comment type="interaction">
    <interactant intactId="EBI-745775">
        <id>Q96H86</id>
    </interactant>
    <interactant intactId="EBI-373456">
        <id>Q9Y3S2</id>
        <label>ZNF330</label>
    </interactant>
    <organismsDiffer>false</organismsDiffer>
    <experiments>3</experiments>
</comment>
<comment type="interaction">
    <interactant intactId="EBI-745775">
        <id>Q96H86</id>
    </interactant>
    <interactant intactId="EBI-347633">
        <id>Q9H9D4</id>
        <label>ZNF408</label>
    </interactant>
    <organismsDiffer>false</organismsDiffer>
    <experiments>3</experiments>
</comment>
<comment type="interaction">
    <interactant intactId="EBI-745775">
        <id>Q96H86</id>
    </interactant>
    <interactant intactId="EBI-11962574">
        <id>Q96EG3</id>
        <label>ZNF837</label>
    </interactant>
    <organismsDiffer>false</organismsDiffer>
    <experiments>3</experiments>
</comment>
<comment type="interaction">
    <interactant intactId="EBI-745775">
        <id>Q96H86</id>
    </interactant>
    <interactant intactId="EBI-527853">
        <id>Q9UGI0</id>
        <label>ZRANB1</label>
    </interactant>
    <organismsDiffer>false</organismsDiffer>
    <experiments>3</experiments>
</comment>
<comment type="subcellular location">
    <subcellularLocation>
        <location evidence="5">Nucleus</location>
    </subcellularLocation>
</comment>
<comment type="alternative products">
    <event type="alternative splicing"/>
    <isoform>
        <id>Q96H86-1</id>
        <name>1</name>
        <sequence type="displayed"/>
    </isoform>
    <isoform>
        <id>Q96H86-2</id>
        <name>2</name>
        <sequence type="described" ref="VSP_045352"/>
    </isoform>
</comment>
<comment type="domain">
    <text evidence="5">The KRAB domain and the zinc finger domain are both necessary for the regulation of NR3C1/GR transcriptional activity.</text>
</comment>
<comment type="similarity">
    <text evidence="7">Belongs to the krueppel C2H2-type zinc-finger protein family.</text>
</comment>
<dbReference type="EMBL" id="AK093992">
    <property type="protein sequence ID" value="BAG52794.1"/>
    <property type="molecule type" value="mRNA"/>
</dbReference>
<dbReference type="EMBL" id="AC002310">
    <property type="status" value="NOT_ANNOTATED_CDS"/>
    <property type="molecule type" value="Genomic_DNA"/>
</dbReference>
<dbReference type="EMBL" id="BC000016">
    <property type="protein sequence ID" value="AAH00016.2"/>
    <property type="molecule type" value="mRNA"/>
</dbReference>
<dbReference type="EMBL" id="BC008821">
    <property type="protein sequence ID" value="AAH08821.1"/>
    <property type="molecule type" value="mRNA"/>
</dbReference>
<dbReference type="CCDS" id="CCDS10683.1">
    <molecule id="Q96H86-1"/>
</dbReference>
<dbReference type="CCDS" id="CCDS54001.1">
    <molecule id="Q96H86-2"/>
</dbReference>
<dbReference type="RefSeq" id="NP_001166150.1">
    <molecule id="Q96H86-2"/>
    <property type="nucleotide sequence ID" value="NM_001172679.2"/>
</dbReference>
<dbReference type="RefSeq" id="NP_219363.2">
    <molecule id="Q96H86-1"/>
    <property type="nucleotide sequence ID" value="NM_033410.4"/>
</dbReference>
<dbReference type="SMR" id="Q96H86"/>
<dbReference type="BioGRID" id="124959">
    <property type="interactions" value="92"/>
</dbReference>
<dbReference type="FunCoup" id="Q96H86">
    <property type="interactions" value="116"/>
</dbReference>
<dbReference type="IntAct" id="Q96H86">
    <property type="interactions" value="94"/>
</dbReference>
<dbReference type="STRING" id="9606.ENSP00000252797"/>
<dbReference type="iPTMnet" id="Q96H86"/>
<dbReference type="PhosphoSitePlus" id="Q96H86"/>
<dbReference type="BioMuta" id="ZNF764"/>
<dbReference type="DMDM" id="218511973"/>
<dbReference type="jPOST" id="Q96H86"/>
<dbReference type="MassIVE" id="Q96H86"/>
<dbReference type="PaxDb" id="9606-ENSP00000252797"/>
<dbReference type="PeptideAtlas" id="Q96H86"/>
<dbReference type="ProteomicsDB" id="46246"/>
<dbReference type="ProteomicsDB" id="76712">
    <molecule id="Q96H86-1"/>
</dbReference>
<dbReference type="Pumba" id="Q96H86"/>
<dbReference type="Antibodypedia" id="837">
    <property type="antibodies" value="97 antibodies from 17 providers"/>
</dbReference>
<dbReference type="DNASU" id="92595"/>
<dbReference type="Ensembl" id="ENST00000252797.6">
    <molecule id="Q96H86-1"/>
    <property type="protein sequence ID" value="ENSP00000252797.2"/>
    <property type="gene ID" value="ENSG00000169951.10"/>
</dbReference>
<dbReference type="Ensembl" id="ENST00000395091.3">
    <molecule id="Q96H86-2"/>
    <property type="protein sequence ID" value="ENSP00000378526.2"/>
    <property type="gene ID" value="ENSG00000169951.10"/>
</dbReference>
<dbReference type="GeneID" id="92595"/>
<dbReference type="KEGG" id="hsa:92595"/>
<dbReference type="MANE-Select" id="ENST00000395091.3">
    <molecule id="Q96H86-2"/>
    <property type="protein sequence ID" value="ENSP00000378526.2"/>
    <property type="RefSeq nucleotide sequence ID" value="NM_001172679.2"/>
    <property type="RefSeq protein sequence ID" value="NP_001166150.1"/>
</dbReference>
<dbReference type="UCSC" id="uc002dyq.4">
    <molecule id="Q96H86-1"/>
    <property type="organism name" value="human"/>
</dbReference>
<dbReference type="AGR" id="HGNC:28200"/>
<dbReference type="CTD" id="92595"/>
<dbReference type="DisGeNET" id="92595"/>
<dbReference type="GeneCards" id="ZNF764"/>
<dbReference type="HGNC" id="HGNC:28200">
    <property type="gene designation" value="ZNF764"/>
</dbReference>
<dbReference type="HPA" id="ENSG00000169951">
    <property type="expression patterns" value="Low tissue specificity"/>
</dbReference>
<dbReference type="MIM" id="619524">
    <property type="type" value="gene"/>
</dbReference>
<dbReference type="neXtProt" id="NX_Q96H86"/>
<dbReference type="OpenTargets" id="ENSG00000169951"/>
<dbReference type="PharmGKB" id="PA162410311"/>
<dbReference type="VEuPathDB" id="HostDB:ENSG00000169951"/>
<dbReference type="eggNOG" id="KOG1721">
    <property type="taxonomic scope" value="Eukaryota"/>
</dbReference>
<dbReference type="GeneTree" id="ENSGT00940000160032"/>
<dbReference type="HOGENOM" id="CLU_002678_13_1_1"/>
<dbReference type="InParanoid" id="Q96H86"/>
<dbReference type="OMA" id="RRHGCYV"/>
<dbReference type="OrthoDB" id="6077919at2759"/>
<dbReference type="PAN-GO" id="Q96H86">
    <property type="GO annotations" value="3 GO annotations based on evolutionary models"/>
</dbReference>
<dbReference type="PhylomeDB" id="Q96H86"/>
<dbReference type="TreeFam" id="TF337922"/>
<dbReference type="PathwayCommons" id="Q96H86"/>
<dbReference type="Reactome" id="R-HSA-212436">
    <property type="pathway name" value="Generic Transcription Pathway"/>
</dbReference>
<dbReference type="SignaLink" id="Q96H86"/>
<dbReference type="BioGRID-ORCS" id="92595">
    <property type="hits" value="16 hits in 1185 CRISPR screens"/>
</dbReference>
<dbReference type="ChiTaRS" id="ZNF764">
    <property type="organism name" value="human"/>
</dbReference>
<dbReference type="GenomeRNAi" id="92595"/>
<dbReference type="Pharos" id="Q96H86">
    <property type="development level" value="Tdark"/>
</dbReference>
<dbReference type="PRO" id="PR:Q96H86"/>
<dbReference type="Proteomes" id="UP000005640">
    <property type="component" value="Chromosome 16"/>
</dbReference>
<dbReference type="RNAct" id="Q96H86">
    <property type="molecule type" value="protein"/>
</dbReference>
<dbReference type="Bgee" id="ENSG00000169951">
    <property type="expression patterns" value="Expressed in primordial germ cell in gonad and 160 other cell types or tissues"/>
</dbReference>
<dbReference type="ExpressionAtlas" id="Q96H86">
    <property type="expression patterns" value="baseline and differential"/>
</dbReference>
<dbReference type="GO" id="GO:0005634">
    <property type="term" value="C:nucleus"/>
    <property type="evidence" value="ECO:0000314"/>
    <property type="project" value="UniProt"/>
</dbReference>
<dbReference type="GO" id="GO:0000981">
    <property type="term" value="F:DNA-binding transcription factor activity, RNA polymerase II-specific"/>
    <property type="evidence" value="ECO:0000318"/>
    <property type="project" value="GO_Central"/>
</dbReference>
<dbReference type="GO" id="GO:0000977">
    <property type="term" value="F:RNA polymerase II transcription regulatory region sequence-specific DNA binding"/>
    <property type="evidence" value="ECO:0000318"/>
    <property type="project" value="GO_Central"/>
</dbReference>
<dbReference type="GO" id="GO:0003712">
    <property type="term" value="F:transcription coregulator activity"/>
    <property type="evidence" value="ECO:0000314"/>
    <property type="project" value="UniProt"/>
</dbReference>
<dbReference type="GO" id="GO:0008270">
    <property type="term" value="F:zinc ion binding"/>
    <property type="evidence" value="ECO:0007669"/>
    <property type="project" value="UniProtKB-KW"/>
</dbReference>
<dbReference type="GO" id="GO:0071385">
    <property type="term" value="P:cellular response to glucocorticoid stimulus"/>
    <property type="evidence" value="ECO:0000314"/>
    <property type="project" value="UniProt"/>
</dbReference>
<dbReference type="GO" id="GO:0006357">
    <property type="term" value="P:regulation of transcription by RNA polymerase II"/>
    <property type="evidence" value="ECO:0000318"/>
    <property type="project" value="GO_Central"/>
</dbReference>
<dbReference type="CDD" id="cd07765">
    <property type="entry name" value="KRAB_A-box"/>
    <property type="match status" value="1"/>
</dbReference>
<dbReference type="FunFam" id="3.30.160.60:FF:000557">
    <property type="entry name" value="zinc finger and SCAN domain-containing protein 29"/>
    <property type="match status" value="1"/>
</dbReference>
<dbReference type="FunFam" id="3.30.160.60:FF:001119">
    <property type="entry name" value="zinc finger protein 408"/>
    <property type="match status" value="1"/>
</dbReference>
<dbReference type="FunFam" id="3.30.160.60:FF:000340">
    <property type="entry name" value="zinc finger protein 473 isoform X1"/>
    <property type="match status" value="1"/>
</dbReference>
<dbReference type="FunFam" id="3.30.160.60:FF:000180">
    <property type="entry name" value="Zinc finger protein 689"/>
    <property type="match status" value="3"/>
</dbReference>
<dbReference type="FunFam" id="3.30.160.60:FF:002226">
    <property type="entry name" value="Zinc finger protein 764"/>
    <property type="match status" value="1"/>
</dbReference>
<dbReference type="Gene3D" id="6.10.140.140">
    <property type="match status" value="1"/>
</dbReference>
<dbReference type="Gene3D" id="3.30.160.60">
    <property type="entry name" value="Classic Zinc Finger"/>
    <property type="match status" value="7"/>
</dbReference>
<dbReference type="InterPro" id="IPR001909">
    <property type="entry name" value="KRAB"/>
</dbReference>
<dbReference type="InterPro" id="IPR036051">
    <property type="entry name" value="KRAB_dom_sf"/>
</dbReference>
<dbReference type="InterPro" id="IPR050758">
    <property type="entry name" value="Znf_C2H2-type"/>
</dbReference>
<dbReference type="InterPro" id="IPR036236">
    <property type="entry name" value="Znf_C2H2_sf"/>
</dbReference>
<dbReference type="InterPro" id="IPR013087">
    <property type="entry name" value="Znf_C2H2_type"/>
</dbReference>
<dbReference type="PANTHER" id="PTHR23234:SF8">
    <property type="entry name" value="C2H2-TYPE DOMAIN-CONTAINING PROTEIN"/>
    <property type="match status" value="1"/>
</dbReference>
<dbReference type="PANTHER" id="PTHR23234">
    <property type="entry name" value="ZNF44 PROTEIN"/>
    <property type="match status" value="1"/>
</dbReference>
<dbReference type="Pfam" id="PF01352">
    <property type="entry name" value="KRAB"/>
    <property type="match status" value="1"/>
</dbReference>
<dbReference type="Pfam" id="PF00096">
    <property type="entry name" value="zf-C2H2"/>
    <property type="match status" value="6"/>
</dbReference>
<dbReference type="SMART" id="SM00349">
    <property type="entry name" value="KRAB"/>
    <property type="match status" value="1"/>
</dbReference>
<dbReference type="SMART" id="SM00355">
    <property type="entry name" value="ZnF_C2H2"/>
    <property type="match status" value="7"/>
</dbReference>
<dbReference type="SUPFAM" id="SSF57667">
    <property type="entry name" value="beta-beta-alpha zinc fingers"/>
    <property type="match status" value="4"/>
</dbReference>
<dbReference type="SUPFAM" id="SSF109640">
    <property type="entry name" value="KRAB domain (Kruppel-associated box)"/>
    <property type="match status" value="1"/>
</dbReference>
<dbReference type="PROSITE" id="PS50805">
    <property type="entry name" value="KRAB"/>
    <property type="match status" value="1"/>
</dbReference>
<dbReference type="PROSITE" id="PS00028">
    <property type="entry name" value="ZINC_FINGER_C2H2_1"/>
    <property type="match status" value="7"/>
</dbReference>
<dbReference type="PROSITE" id="PS50157">
    <property type="entry name" value="ZINC_FINGER_C2H2_2"/>
    <property type="match status" value="7"/>
</dbReference>
<proteinExistence type="evidence at protein level"/>
<sequence>MAPPLAPLPPRDPNGAGPEWREPGAVSFADVAVYFCREEWGCLRPAQRALYRDVMRETYGHLSALGIGGNKPALISWVEEEAELWGPAAQDPEVAKCQTQTDPADSRNKKKERQREGTGALEKPDPVAAGSPGLKSPQAPSAGPPYGWEQLSKAPHRGRPSLCAHPPVPRADQRHGCYVCGKSFAWRSTLVEHVYSHTGEKPFHCTDCGKGFGHASSLSKHRAIHRGERPHRCLECGRAFTQRSALTSHLRVHTGEKPYGCADCGRRFSQSSALYQHRRVHSGETPFPCPDCGRAFAYPSDLRRHVRTHTGEKPYPCPDCGRCFRQSSEMAAHRRTHSGEKPYPCPQCGRRFGQKSAVAKHQWVHRPGAGGHRGRVAGRLSVTLTPGHGDLDPPVGFQLYPEIFQECG</sequence>
<keyword id="KW-0025">Alternative splicing</keyword>
<keyword id="KW-0238">DNA-binding</keyword>
<keyword id="KW-0479">Metal-binding</keyword>
<keyword id="KW-0539">Nucleus</keyword>
<keyword id="KW-1267">Proteomics identification</keyword>
<keyword id="KW-1185">Reference proteome</keyword>
<keyword id="KW-0677">Repeat</keyword>
<keyword id="KW-0804">Transcription</keyword>
<keyword id="KW-0805">Transcription regulation</keyword>
<keyword id="KW-0862">Zinc</keyword>
<keyword id="KW-0863">Zinc-finger</keyword>
<feature type="chain" id="PRO_0000274398" description="Zinc finger protein 764">
    <location>
        <begin position="1"/>
        <end position="408"/>
    </location>
</feature>
<feature type="domain" description="KRAB" evidence="2">
    <location>
        <begin position="26"/>
        <end position="97"/>
    </location>
</feature>
<feature type="zinc finger region" description="C2H2-type 1" evidence="1">
    <location>
        <begin position="175"/>
        <end position="197"/>
    </location>
</feature>
<feature type="zinc finger region" description="C2H2-type 2" evidence="1">
    <location>
        <begin position="203"/>
        <end position="225"/>
    </location>
</feature>
<feature type="zinc finger region" description="C2H2-type 3" evidence="1">
    <location>
        <begin position="231"/>
        <end position="253"/>
    </location>
</feature>
<feature type="zinc finger region" description="C2H2-type 4" evidence="1">
    <location>
        <begin position="259"/>
        <end position="281"/>
    </location>
</feature>
<feature type="zinc finger region" description="C2H2-type 5" evidence="1">
    <location>
        <begin position="287"/>
        <end position="309"/>
    </location>
</feature>
<feature type="zinc finger region" description="C2H2-type 6" evidence="1">
    <location>
        <begin position="315"/>
        <end position="337"/>
    </location>
</feature>
<feature type="zinc finger region" description="C2H2-type 7" evidence="1">
    <location>
        <begin position="343"/>
        <end position="365"/>
    </location>
</feature>
<feature type="region of interest" description="Disordered" evidence="3">
    <location>
        <begin position="91"/>
        <end position="167"/>
    </location>
</feature>
<feature type="splice variant" id="VSP_045352" description="In isoform 2." evidence="6">
    <location>
        <position position="104"/>
    </location>
</feature>
<feature type="sequence variant" id="VAR_047845" description="In dbSNP:rs17850402." evidence="4">
    <original>A</original>
    <variation>V</variation>
    <location>
        <position position="332"/>
    </location>
</feature>
<feature type="sequence conflict" description="In Ref. 1; BAG52794." evidence="7" ref="1">
    <original>V</original>
    <variation>A</variation>
    <location>
        <position position="382"/>
    </location>
</feature>
<protein>
    <recommendedName>
        <fullName>Zinc finger protein 764</fullName>
    </recommendedName>
</protein>
<gene>
    <name evidence="8" type="primary">ZNF764</name>
</gene>
<reference key="1">
    <citation type="journal article" date="2004" name="Nat. Genet.">
        <title>Complete sequencing and characterization of 21,243 full-length human cDNAs.</title>
        <authorList>
            <person name="Ota T."/>
            <person name="Suzuki Y."/>
            <person name="Nishikawa T."/>
            <person name="Otsuki T."/>
            <person name="Sugiyama T."/>
            <person name="Irie R."/>
            <person name="Wakamatsu A."/>
            <person name="Hayashi K."/>
            <person name="Sato H."/>
            <person name="Nagai K."/>
            <person name="Kimura K."/>
            <person name="Makita H."/>
            <person name="Sekine M."/>
            <person name="Obayashi M."/>
            <person name="Nishi T."/>
            <person name="Shibahara T."/>
            <person name="Tanaka T."/>
            <person name="Ishii S."/>
            <person name="Yamamoto J."/>
            <person name="Saito K."/>
            <person name="Kawai Y."/>
            <person name="Isono Y."/>
            <person name="Nakamura Y."/>
            <person name="Nagahari K."/>
            <person name="Murakami K."/>
            <person name="Yasuda T."/>
            <person name="Iwayanagi T."/>
            <person name="Wagatsuma M."/>
            <person name="Shiratori A."/>
            <person name="Sudo H."/>
            <person name="Hosoiri T."/>
            <person name="Kaku Y."/>
            <person name="Kodaira H."/>
            <person name="Kondo H."/>
            <person name="Sugawara M."/>
            <person name="Takahashi M."/>
            <person name="Kanda K."/>
            <person name="Yokoi T."/>
            <person name="Furuya T."/>
            <person name="Kikkawa E."/>
            <person name="Omura Y."/>
            <person name="Abe K."/>
            <person name="Kamihara K."/>
            <person name="Katsuta N."/>
            <person name="Sato K."/>
            <person name="Tanikawa M."/>
            <person name="Yamazaki M."/>
            <person name="Ninomiya K."/>
            <person name="Ishibashi T."/>
            <person name="Yamashita H."/>
            <person name="Murakawa K."/>
            <person name="Fujimori K."/>
            <person name="Tanai H."/>
            <person name="Kimata M."/>
            <person name="Watanabe M."/>
            <person name="Hiraoka S."/>
            <person name="Chiba Y."/>
            <person name="Ishida S."/>
            <person name="Ono Y."/>
            <person name="Takiguchi S."/>
            <person name="Watanabe S."/>
            <person name="Yosida M."/>
            <person name="Hotuta T."/>
            <person name="Kusano J."/>
            <person name="Kanehori K."/>
            <person name="Takahashi-Fujii A."/>
            <person name="Hara H."/>
            <person name="Tanase T.-O."/>
            <person name="Nomura Y."/>
            <person name="Togiya S."/>
            <person name="Komai F."/>
            <person name="Hara R."/>
            <person name="Takeuchi K."/>
            <person name="Arita M."/>
            <person name="Imose N."/>
            <person name="Musashino K."/>
            <person name="Yuuki H."/>
            <person name="Oshima A."/>
            <person name="Sasaki N."/>
            <person name="Aotsuka S."/>
            <person name="Yoshikawa Y."/>
            <person name="Matsunawa H."/>
            <person name="Ichihara T."/>
            <person name="Shiohata N."/>
            <person name="Sano S."/>
            <person name="Moriya S."/>
            <person name="Momiyama H."/>
            <person name="Satoh N."/>
            <person name="Takami S."/>
            <person name="Terashima Y."/>
            <person name="Suzuki O."/>
            <person name="Nakagawa S."/>
            <person name="Senoh A."/>
            <person name="Mizoguchi H."/>
            <person name="Goto Y."/>
            <person name="Shimizu F."/>
            <person name="Wakebe H."/>
            <person name="Hishigaki H."/>
            <person name="Watanabe T."/>
            <person name="Sugiyama A."/>
            <person name="Takemoto M."/>
            <person name="Kawakami B."/>
            <person name="Yamazaki M."/>
            <person name="Watanabe K."/>
            <person name="Kumagai A."/>
            <person name="Itakura S."/>
            <person name="Fukuzumi Y."/>
            <person name="Fujimori Y."/>
            <person name="Komiyama M."/>
            <person name="Tashiro H."/>
            <person name="Tanigami A."/>
            <person name="Fujiwara T."/>
            <person name="Ono T."/>
            <person name="Yamada K."/>
            <person name="Fujii Y."/>
            <person name="Ozaki K."/>
            <person name="Hirao M."/>
            <person name="Ohmori Y."/>
            <person name="Kawabata A."/>
            <person name="Hikiji T."/>
            <person name="Kobatake N."/>
            <person name="Inagaki H."/>
            <person name="Ikema Y."/>
            <person name="Okamoto S."/>
            <person name="Okitani R."/>
            <person name="Kawakami T."/>
            <person name="Noguchi S."/>
            <person name="Itoh T."/>
            <person name="Shigeta K."/>
            <person name="Senba T."/>
            <person name="Matsumura K."/>
            <person name="Nakajima Y."/>
            <person name="Mizuno T."/>
            <person name="Morinaga M."/>
            <person name="Sasaki M."/>
            <person name="Togashi T."/>
            <person name="Oyama M."/>
            <person name="Hata H."/>
            <person name="Watanabe M."/>
            <person name="Komatsu T."/>
            <person name="Mizushima-Sugano J."/>
            <person name="Satoh T."/>
            <person name="Shirai Y."/>
            <person name="Takahashi Y."/>
            <person name="Nakagawa K."/>
            <person name="Okumura K."/>
            <person name="Nagase T."/>
            <person name="Nomura N."/>
            <person name="Kikuchi H."/>
            <person name="Masuho Y."/>
            <person name="Yamashita R."/>
            <person name="Nakai K."/>
            <person name="Yada T."/>
            <person name="Nakamura Y."/>
            <person name="Ohara O."/>
            <person name="Isogai T."/>
            <person name="Sugano S."/>
        </authorList>
    </citation>
    <scope>NUCLEOTIDE SEQUENCE [LARGE SCALE MRNA] (ISOFORM 2)</scope>
    <source>
        <tissue>Uterus</tissue>
    </source>
</reference>
<reference key="2">
    <citation type="journal article" date="2004" name="Nature">
        <title>The sequence and analysis of duplication-rich human chromosome 16.</title>
        <authorList>
            <person name="Martin J."/>
            <person name="Han C."/>
            <person name="Gordon L.A."/>
            <person name="Terry A."/>
            <person name="Prabhakar S."/>
            <person name="She X."/>
            <person name="Xie G."/>
            <person name="Hellsten U."/>
            <person name="Chan Y.M."/>
            <person name="Altherr M."/>
            <person name="Couronne O."/>
            <person name="Aerts A."/>
            <person name="Bajorek E."/>
            <person name="Black S."/>
            <person name="Blumer H."/>
            <person name="Branscomb E."/>
            <person name="Brown N.C."/>
            <person name="Bruno W.J."/>
            <person name="Buckingham J.M."/>
            <person name="Callen D.F."/>
            <person name="Campbell C.S."/>
            <person name="Campbell M.L."/>
            <person name="Campbell E.W."/>
            <person name="Caoile C."/>
            <person name="Challacombe J.F."/>
            <person name="Chasteen L.A."/>
            <person name="Chertkov O."/>
            <person name="Chi H.C."/>
            <person name="Christensen M."/>
            <person name="Clark L.M."/>
            <person name="Cohn J.D."/>
            <person name="Denys M."/>
            <person name="Detter J.C."/>
            <person name="Dickson M."/>
            <person name="Dimitrijevic-Bussod M."/>
            <person name="Escobar J."/>
            <person name="Fawcett J.J."/>
            <person name="Flowers D."/>
            <person name="Fotopulos D."/>
            <person name="Glavina T."/>
            <person name="Gomez M."/>
            <person name="Gonzales E."/>
            <person name="Goodstein D."/>
            <person name="Goodwin L.A."/>
            <person name="Grady D.L."/>
            <person name="Grigoriev I."/>
            <person name="Groza M."/>
            <person name="Hammon N."/>
            <person name="Hawkins T."/>
            <person name="Haydu L."/>
            <person name="Hildebrand C.E."/>
            <person name="Huang W."/>
            <person name="Israni S."/>
            <person name="Jett J."/>
            <person name="Jewett P.B."/>
            <person name="Kadner K."/>
            <person name="Kimball H."/>
            <person name="Kobayashi A."/>
            <person name="Krawczyk M.-C."/>
            <person name="Leyba T."/>
            <person name="Longmire J.L."/>
            <person name="Lopez F."/>
            <person name="Lou Y."/>
            <person name="Lowry S."/>
            <person name="Ludeman T."/>
            <person name="Manohar C.F."/>
            <person name="Mark G.A."/>
            <person name="McMurray K.L."/>
            <person name="Meincke L.J."/>
            <person name="Morgan J."/>
            <person name="Moyzis R.K."/>
            <person name="Mundt M.O."/>
            <person name="Munk A.C."/>
            <person name="Nandkeshwar R.D."/>
            <person name="Pitluck S."/>
            <person name="Pollard M."/>
            <person name="Predki P."/>
            <person name="Parson-Quintana B."/>
            <person name="Ramirez L."/>
            <person name="Rash S."/>
            <person name="Retterer J."/>
            <person name="Ricke D.O."/>
            <person name="Robinson D.L."/>
            <person name="Rodriguez A."/>
            <person name="Salamov A."/>
            <person name="Saunders E.H."/>
            <person name="Scott D."/>
            <person name="Shough T."/>
            <person name="Stallings R.L."/>
            <person name="Stalvey M."/>
            <person name="Sutherland R.D."/>
            <person name="Tapia R."/>
            <person name="Tesmer J.G."/>
            <person name="Thayer N."/>
            <person name="Thompson L.S."/>
            <person name="Tice H."/>
            <person name="Torney D.C."/>
            <person name="Tran-Gyamfi M."/>
            <person name="Tsai M."/>
            <person name="Ulanovsky L.E."/>
            <person name="Ustaszewska A."/>
            <person name="Vo N."/>
            <person name="White P.S."/>
            <person name="Williams A.L."/>
            <person name="Wills P.L."/>
            <person name="Wu J.-R."/>
            <person name="Wu K."/>
            <person name="Yang J."/>
            <person name="DeJong P."/>
            <person name="Bruce D."/>
            <person name="Doggett N.A."/>
            <person name="Deaven L."/>
            <person name="Schmutz J."/>
            <person name="Grimwood J."/>
            <person name="Richardson P."/>
            <person name="Rokhsar D.S."/>
            <person name="Eichler E.E."/>
            <person name="Gilna P."/>
            <person name="Lucas S.M."/>
            <person name="Myers R.M."/>
            <person name="Rubin E.M."/>
            <person name="Pennacchio L.A."/>
        </authorList>
    </citation>
    <scope>NUCLEOTIDE SEQUENCE [LARGE SCALE GENOMIC DNA]</scope>
</reference>
<reference key="3">
    <citation type="journal article" date="2004" name="Genome Res.">
        <title>The status, quality, and expansion of the NIH full-length cDNA project: the Mammalian Gene Collection (MGC).</title>
        <authorList>
            <consortium name="The MGC Project Team"/>
        </authorList>
    </citation>
    <scope>NUCLEOTIDE SEQUENCE [LARGE SCALE MRNA] (ISOFORM 1)</scope>
    <scope>VARIANT VAL-332</scope>
    <source>
        <tissue>Brain</tissue>
    </source>
</reference>
<reference key="4">
    <citation type="journal article" date="2017" name="Sci. Rep.">
        <title>Genome-wide Regulatory Roles of the C2H2-type Zinc Finger Protein ZNF764 on the Glucocorticoid Receptor.</title>
        <authorList>
            <person name="Fadda A."/>
            <person name="Syed N."/>
            <person name="Mackeh R."/>
            <person name="Papadopoulou A."/>
            <person name="Suzuki S."/>
            <person name="Jithesh P.V."/>
            <person name="Kino T."/>
        </authorList>
    </citation>
    <scope>FUNCTION</scope>
    <scope>SUBCELLULAR LOCATION</scope>
    <scope>INTERACTION WITH NR3C1</scope>
</reference>